<organism>
    <name type="scientific">Buchnera aphidicola subsp. Acyrthosiphon pisum (strain 5A)</name>
    <dbReference type="NCBI Taxonomy" id="563178"/>
    <lineage>
        <taxon>Bacteria</taxon>
        <taxon>Pseudomonadati</taxon>
        <taxon>Pseudomonadota</taxon>
        <taxon>Gammaproteobacteria</taxon>
        <taxon>Enterobacterales</taxon>
        <taxon>Erwiniaceae</taxon>
        <taxon>Buchnera</taxon>
    </lineage>
</organism>
<evidence type="ECO:0000255" key="1">
    <source>
        <dbReference type="HAMAP-Rule" id="MF_00315"/>
    </source>
</evidence>
<comment type="function">
    <text evidence="1">Catalyzes the acyloin condensation reaction between C atoms 2 and 3 of pyruvate and glyceraldehyde 3-phosphate to yield 1-deoxy-D-xylulose-5-phosphate (DXP).</text>
</comment>
<comment type="catalytic activity">
    <reaction evidence="1">
        <text>D-glyceraldehyde 3-phosphate + pyruvate + H(+) = 1-deoxy-D-xylulose 5-phosphate + CO2</text>
        <dbReference type="Rhea" id="RHEA:12605"/>
        <dbReference type="ChEBI" id="CHEBI:15361"/>
        <dbReference type="ChEBI" id="CHEBI:15378"/>
        <dbReference type="ChEBI" id="CHEBI:16526"/>
        <dbReference type="ChEBI" id="CHEBI:57792"/>
        <dbReference type="ChEBI" id="CHEBI:59776"/>
        <dbReference type="EC" id="2.2.1.7"/>
    </reaction>
</comment>
<comment type="cofactor">
    <cofactor evidence="1">
        <name>Mg(2+)</name>
        <dbReference type="ChEBI" id="CHEBI:18420"/>
    </cofactor>
    <text evidence="1">Binds 1 Mg(2+) ion per subunit.</text>
</comment>
<comment type="cofactor">
    <cofactor evidence="1">
        <name>thiamine diphosphate</name>
        <dbReference type="ChEBI" id="CHEBI:58937"/>
    </cofactor>
    <text evidence="1">Binds 1 thiamine pyrophosphate per subunit.</text>
</comment>
<comment type="pathway">
    <text evidence="1">Metabolic intermediate biosynthesis; 1-deoxy-D-xylulose 5-phosphate biosynthesis; 1-deoxy-D-xylulose 5-phosphate from D-glyceraldehyde 3-phosphate and pyruvate: step 1/1.</text>
</comment>
<comment type="subunit">
    <text evidence="1">Homodimer.</text>
</comment>
<comment type="similarity">
    <text evidence="1">Belongs to the transketolase family. DXPS subfamily.</text>
</comment>
<sequence>MNFNFNKYPILSFANSVENLRLLSVEQLPQLCFELREYLLDVVSISKGHFASGLGVVEITVALHYVYNTPFDNLLWDTGHQAYPHKILTGRGEKINSIRKKNGLHSFPCREESEYDSLSVGHSSTSISAGLGMSIAAEKEGRNRKTICIIGDGAMTAGMAFEAINHAGEIQSNLLVILNDNQMSISRNVGALNKHLKILRSVQNTQKNRKKIRLLNKKLFFKDKRIQNHSISFNSIFSNLGCKYLGPFDGHNIFSIINTLKKIKNKKGTYLLHLVTKKGKGYLPAELNPIKWHTISSRDSSVSKSLSYSDVFGTWLCEIAAFDKKLIAITPAMCEGSGMVKFSRLFPNQYFDVAIAEQHAVTFAAGLAISGYKPVVSIYSTFFQRAYDQLIHDIALQKLSVLFAVDRAGIVGNDGQTHQGVFDLAYLRCIPGIVIMTPSNENECRQMLYTGYMHNKGPSVVRYPKGYGVGALLMPMNRIPIGKSLIKRRGKKIAILNFGILLHNAYCAAEKLDATLVDMRFVKPLDKSMILKLSSQNKFFITLEEGVISGGAGSAVNEFIMVNKIFLPVLNIGLPDTFIPQGTQEEIRHVYKLDSEGIYKQIFYWLRQ</sequence>
<reference key="1">
    <citation type="journal article" date="2009" name="Science">
        <title>The dynamics and time scale of ongoing genomic erosion in symbiotic bacteria.</title>
        <authorList>
            <person name="Moran N.A."/>
            <person name="McLaughlin H.J."/>
            <person name="Sorek R."/>
        </authorList>
    </citation>
    <scope>NUCLEOTIDE SEQUENCE [LARGE SCALE GENOMIC DNA]</scope>
    <source>
        <strain>5A</strain>
    </source>
</reference>
<dbReference type="EC" id="2.2.1.7" evidence="1"/>
<dbReference type="EMBL" id="CP001161">
    <property type="protein sequence ID" value="ACL30812.1"/>
    <property type="molecule type" value="Genomic_DNA"/>
</dbReference>
<dbReference type="RefSeq" id="WP_009874416.1">
    <property type="nucleotide sequence ID" value="NC_011833.1"/>
</dbReference>
<dbReference type="SMR" id="B8D9P1"/>
<dbReference type="KEGG" id="bap:BUAP5A_457"/>
<dbReference type="HOGENOM" id="CLU_009227_1_4_6"/>
<dbReference type="OrthoDB" id="9803371at2"/>
<dbReference type="UniPathway" id="UPA00064">
    <property type="reaction ID" value="UER00091"/>
</dbReference>
<dbReference type="Proteomes" id="UP000006904">
    <property type="component" value="Chromosome"/>
</dbReference>
<dbReference type="GO" id="GO:0005829">
    <property type="term" value="C:cytosol"/>
    <property type="evidence" value="ECO:0007669"/>
    <property type="project" value="TreeGrafter"/>
</dbReference>
<dbReference type="GO" id="GO:0008661">
    <property type="term" value="F:1-deoxy-D-xylulose-5-phosphate synthase activity"/>
    <property type="evidence" value="ECO:0007669"/>
    <property type="project" value="UniProtKB-UniRule"/>
</dbReference>
<dbReference type="GO" id="GO:0000287">
    <property type="term" value="F:magnesium ion binding"/>
    <property type="evidence" value="ECO:0007669"/>
    <property type="project" value="UniProtKB-UniRule"/>
</dbReference>
<dbReference type="GO" id="GO:0030976">
    <property type="term" value="F:thiamine pyrophosphate binding"/>
    <property type="evidence" value="ECO:0007669"/>
    <property type="project" value="UniProtKB-UniRule"/>
</dbReference>
<dbReference type="GO" id="GO:0052865">
    <property type="term" value="P:1-deoxy-D-xylulose 5-phosphate biosynthetic process"/>
    <property type="evidence" value="ECO:0007669"/>
    <property type="project" value="UniProtKB-UniPathway"/>
</dbReference>
<dbReference type="GO" id="GO:0019288">
    <property type="term" value="P:isopentenyl diphosphate biosynthetic process, methylerythritol 4-phosphate pathway"/>
    <property type="evidence" value="ECO:0007669"/>
    <property type="project" value="TreeGrafter"/>
</dbReference>
<dbReference type="GO" id="GO:0016114">
    <property type="term" value="P:terpenoid biosynthetic process"/>
    <property type="evidence" value="ECO:0007669"/>
    <property type="project" value="UniProtKB-UniRule"/>
</dbReference>
<dbReference type="GO" id="GO:0009228">
    <property type="term" value="P:thiamine biosynthetic process"/>
    <property type="evidence" value="ECO:0007669"/>
    <property type="project" value="UniProtKB-UniRule"/>
</dbReference>
<dbReference type="CDD" id="cd02007">
    <property type="entry name" value="TPP_DXS"/>
    <property type="match status" value="1"/>
</dbReference>
<dbReference type="CDD" id="cd07033">
    <property type="entry name" value="TPP_PYR_DXS_TK_like"/>
    <property type="match status" value="1"/>
</dbReference>
<dbReference type="FunFam" id="3.40.50.920:FF:000002">
    <property type="entry name" value="1-deoxy-D-xylulose-5-phosphate synthase"/>
    <property type="match status" value="1"/>
</dbReference>
<dbReference type="FunFam" id="3.40.50.970:FF:000005">
    <property type="entry name" value="1-deoxy-D-xylulose-5-phosphate synthase"/>
    <property type="match status" value="1"/>
</dbReference>
<dbReference type="Gene3D" id="3.40.50.920">
    <property type="match status" value="1"/>
</dbReference>
<dbReference type="Gene3D" id="3.40.50.970">
    <property type="match status" value="2"/>
</dbReference>
<dbReference type="HAMAP" id="MF_00315">
    <property type="entry name" value="DXP_synth"/>
    <property type="match status" value="1"/>
</dbReference>
<dbReference type="InterPro" id="IPR005477">
    <property type="entry name" value="Dxylulose-5-P_synthase"/>
</dbReference>
<dbReference type="InterPro" id="IPR029061">
    <property type="entry name" value="THDP-binding"/>
</dbReference>
<dbReference type="InterPro" id="IPR009014">
    <property type="entry name" value="Transketo_C/PFOR_II"/>
</dbReference>
<dbReference type="InterPro" id="IPR005475">
    <property type="entry name" value="Transketolase-like_Pyr-bd"/>
</dbReference>
<dbReference type="InterPro" id="IPR020826">
    <property type="entry name" value="Transketolase_BS"/>
</dbReference>
<dbReference type="InterPro" id="IPR033248">
    <property type="entry name" value="Transketolase_C"/>
</dbReference>
<dbReference type="NCBIfam" id="TIGR00204">
    <property type="entry name" value="dxs"/>
    <property type="match status" value="1"/>
</dbReference>
<dbReference type="NCBIfam" id="NF003933">
    <property type="entry name" value="PRK05444.2-2"/>
    <property type="match status" value="1"/>
</dbReference>
<dbReference type="PANTHER" id="PTHR43322">
    <property type="entry name" value="1-D-DEOXYXYLULOSE 5-PHOSPHATE SYNTHASE-RELATED"/>
    <property type="match status" value="1"/>
</dbReference>
<dbReference type="PANTHER" id="PTHR43322:SF5">
    <property type="entry name" value="1-DEOXY-D-XYLULOSE-5-PHOSPHATE SYNTHASE, CHLOROPLASTIC"/>
    <property type="match status" value="1"/>
</dbReference>
<dbReference type="Pfam" id="PF13292">
    <property type="entry name" value="DXP_synthase_N"/>
    <property type="match status" value="1"/>
</dbReference>
<dbReference type="Pfam" id="PF02779">
    <property type="entry name" value="Transket_pyr"/>
    <property type="match status" value="1"/>
</dbReference>
<dbReference type="Pfam" id="PF02780">
    <property type="entry name" value="Transketolase_C"/>
    <property type="match status" value="1"/>
</dbReference>
<dbReference type="SMART" id="SM00861">
    <property type="entry name" value="Transket_pyr"/>
    <property type="match status" value="1"/>
</dbReference>
<dbReference type="SUPFAM" id="SSF52518">
    <property type="entry name" value="Thiamin diphosphate-binding fold (THDP-binding)"/>
    <property type="match status" value="2"/>
</dbReference>
<dbReference type="SUPFAM" id="SSF52922">
    <property type="entry name" value="TK C-terminal domain-like"/>
    <property type="match status" value="1"/>
</dbReference>
<dbReference type="PROSITE" id="PS00802">
    <property type="entry name" value="TRANSKETOLASE_2"/>
    <property type="match status" value="1"/>
</dbReference>
<feature type="chain" id="PRO_1000132924" description="1-deoxy-D-xylulose-5-phosphate synthase">
    <location>
        <begin position="1"/>
        <end position="608"/>
    </location>
</feature>
<feature type="binding site" evidence="1">
    <location>
        <position position="80"/>
    </location>
    <ligand>
        <name>thiamine diphosphate</name>
        <dbReference type="ChEBI" id="CHEBI:58937"/>
    </ligand>
</feature>
<feature type="binding site" evidence="1">
    <location>
        <begin position="121"/>
        <end position="123"/>
    </location>
    <ligand>
        <name>thiamine diphosphate</name>
        <dbReference type="ChEBI" id="CHEBI:58937"/>
    </ligand>
</feature>
<feature type="binding site" evidence="1">
    <location>
        <position position="152"/>
    </location>
    <ligand>
        <name>Mg(2+)</name>
        <dbReference type="ChEBI" id="CHEBI:18420"/>
    </ligand>
</feature>
<feature type="binding site" evidence="1">
    <location>
        <begin position="153"/>
        <end position="154"/>
    </location>
    <ligand>
        <name>thiamine diphosphate</name>
        <dbReference type="ChEBI" id="CHEBI:58937"/>
    </ligand>
</feature>
<feature type="binding site" evidence="1">
    <location>
        <position position="181"/>
    </location>
    <ligand>
        <name>Mg(2+)</name>
        <dbReference type="ChEBI" id="CHEBI:18420"/>
    </ligand>
</feature>
<feature type="binding site" evidence="1">
    <location>
        <position position="181"/>
    </location>
    <ligand>
        <name>thiamine diphosphate</name>
        <dbReference type="ChEBI" id="CHEBI:58937"/>
    </ligand>
</feature>
<feature type="binding site" evidence="1">
    <location>
        <position position="282"/>
    </location>
    <ligand>
        <name>thiamine diphosphate</name>
        <dbReference type="ChEBI" id="CHEBI:58937"/>
    </ligand>
</feature>
<feature type="binding site" evidence="1">
    <location>
        <position position="357"/>
    </location>
    <ligand>
        <name>thiamine diphosphate</name>
        <dbReference type="ChEBI" id="CHEBI:58937"/>
    </ligand>
</feature>
<keyword id="KW-0414">Isoprene biosynthesis</keyword>
<keyword id="KW-0460">Magnesium</keyword>
<keyword id="KW-0479">Metal-binding</keyword>
<keyword id="KW-0784">Thiamine biosynthesis</keyword>
<keyword id="KW-0786">Thiamine pyrophosphate</keyword>
<keyword id="KW-0808">Transferase</keyword>
<gene>
    <name evidence="1" type="primary">dxs</name>
    <name type="ordered locus">BUAP5A_457</name>
</gene>
<proteinExistence type="inferred from homology"/>
<name>DXS_BUCA5</name>
<protein>
    <recommendedName>
        <fullName evidence="1">1-deoxy-D-xylulose-5-phosphate synthase</fullName>
        <ecNumber evidence="1">2.2.1.7</ecNumber>
    </recommendedName>
    <alternativeName>
        <fullName evidence="1">1-deoxyxylulose-5-phosphate synthase</fullName>
        <shortName evidence="1">DXP synthase</shortName>
        <shortName evidence="1">DXPS</shortName>
    </alternativeName>
</protein>
<accession>B8D9P1</accession>